<feature type="chain" id="PRO_0000115043" description="Large T antigen">
    <location>
        <begin position="1"/>
        <end position="785"/>
    </location>
</feature>
<feature type="domain" description="J">
    <location>
        <begin position="12"/>
        <end position="75"/>
    </location>
</feature>
<feature type="domain" description="SF3 helicase" evidence="2">
    <location>
        <begin position="547"/>
        <end position="707"/>
    </location>
</feature>
<feature type="DNA-binding region" description="T-ag OBD" evidence="3">
    <location>
        <begin position="293"/>
        <end position="406"/>
    </location>
</feature>
<feature type="zinc finger region" description="T-ag D1-type" evidence="4">
    <location>
        <begin position="415"/>
        <end position="508"/>
    </location>
</feature>
<feature type="region of interest" description="Disordered" evidence="5">
    <location>
        <begin position="74"/>
        <end position="97"/>
    </location>
</feature>
<feature type="region of interest" description="Disordered" evidence="5">
    <location>
        <begin position="145"/>
        <end position="291"/>
    </location>
</feature>
<feature type="short sequence motif" description="LXCXE motif" evidence="1">
    <location>
        <begin position="142"/>
        <end position="146"/>
    </location>
</feature>
<feature type="short sequence motif" description="Nuclear localization signal" evidence="1">
    <location>
        <begin position="279"/>
        <end position="286"/>
    </location>
</feature>
<feature type="compositionally biased region" description="Basic and acidic residues" evidence="5">
    <location>
        <begin position="85"/>
        <end position="97"/>
    </location>
</feature>
<feature type="compositionally biased region" description="Low complexity" evidence="5">
    <location>
        <begin position="148"/>
        <end position="161"/>
    </location>
</feature>
<feature type="compositionally biased region" description="Gly residues" evidence="5">
    <location>
        <begin position="199"/>
        <end position="209"/>
    </location>
</feature>
<feature type="compositionally biased region" description="Low complexity" evidence="5">
    <location>
        <begin position="233"/>
        <end position="247"/>
    </location>
</feature>
<feature type="compositionally biased region" description="Low complexity" evidence="5">
    <location>
        <begin position="264"/>
        <end position="274"/>
    </location>
</feature>
<feature type="binding site" evidence="4">
    <location>
        <position position="452"/>
    </location>
    <ligand>
        <name>Zn(2+)</name>
        <dbReference type="ChEBI" id="CHEBI:29105"/>
    </ligand>
</feature>
<feature type="binding site" evidence="4">
    <location>
        <position position="455"/>
    </location>
    <ligand>
        <name>Zn(2+)</name>
        <dbReference type="ChEBI" id="CHEBI:29105"/>
    </ligand>
</feature>
<feature type="binding site" evidence="4">
    <location>
        <position position="465"/>
    </location>
    <ligand>
        <name>Zn(2+)</name>
        <dbReference type="ChEBI" id="CHEBI:29105"/>
    </ligand>
</feature>
<feature type="binding site" evidence="4">
    <location>
        <position position="469"/>
    </location>
    <ligand>
        <name>Zn(2+)</name>
        <dbReference type="ChEBI" id="CHEBI:29105"/>
    </ligand>
</feature>
<feature type="binding site" evidence="2">
    <location>
        <begin position="573"/>
        <end position="580"/>
    </location>
    <ligand>
        <name>ATP</name>
        <dbReference type="ChEBI" id="CHEBI:30616"/>
    </ligand>
</feature>
<feature type="modified residue" description="N-acetylmethionine; by host" evidence="1">
    <location>
        <position position="1"/>
    </location>
</feature>
<feature type="modified residue" description="Phosphothreonine; by host" evidence="1">
    <location>
        <position position="278"/>
    </location>
</feature>
<accession>P03073</accession>
<dbReference type="EC" id="5.6.2.4" evidence="1"/>
<dbReference type="EMBL" id="J02288">
    <property type="protein sequence ID" value="AAB59901.1"/>
    <property type="molecule type" value="Genomic_DNA"/>
</dbReference>
<dbReference type="PIR" id="D03635">
    <property type="entry name" value="TVVPT"/>
</dbReference>
<dbReference type="BMRB" id="P03073"/>
<dbReference type="SMR" id="P03073"/>
<dbReference type="EvolutionaryTrace" id="P03073"/>
<dbReference type="Proteomes" id="UP000008479">
    <property type="component" value="Genome"/>
</dbReference>
<dbReference type="GO" id="GO:0042025">
    <property type="term" value="C:host cell nucleus"/>
    <property type="evidence" value="ECO:0007669"/>
    <property type="project" value="UniProtKB-SubCell"/>
</dbReference>
<dbReference type="GO" id="GO:0005524">
    <property type="term" value="F:ATP binding"/>
    <property type="evidence" value="ECO:0007669"/>
    <property type="project" value="UniProtKB-KW"/>
</dbReference>
<dbReference type="GO" id="GO:0016887">
    <property type="term" value="F:ATP hydrolysis activity"/>
    <property type="evidence" value="ECO:0007669"/>
    <property type="project" value="RHEA"/>
</dbReference>
<dbReference type="GO" id="GO:0003688">
    <property type="term" value="F:DNA replication origin binding"/>
    <property type="evidence" value="ECO:0007669"/>
    <property type="project" value="InterPro"/>
</dbReference>
<dbReference type="GO" id="GO:0004386">
    <property type="term" value="F:helicase activity"/>
    <property type="evidence" value="ECO:0007669"/>
    <property type="project" value="UniProtKB-KW"/>
</dbReference>
<dbReference type="GO" id="GO:0008270">
    <property type="term" value="F:zinc ion binding"/>
    <property type="evidence" value="ECO:0007669"/>
    <property type="project" value="UniProtKB-KW"/>
</dbReference>
<dbReference type="GO" id="GO:0006260">
    <property type="term" value="P:DNA replication"/>
    <property type="evidence" value="ECO:0007669"/>
    <property type="project" value="UniProtKB-KW"/>
</dbReference>
<dbReference type="GO" id="GO:0039645">
    <property type="term" value="P:symbiont-mediated perturbation of host cell cycle G1/S transition checkpoint"/>
    <property type="evidence" value="ECO:0007669"/>
    <property type="project" value="UniProtKB-KW"/>
</dbReference>
<dbReference type="GO" id="GO:0052170">
    <property type="term" value="P:symbiont-mediated suppression of host innate immune response"/>
    <property type="evidence" value="ECO:0007669"/>
    <property type="project" value="UniProtKB-KW"/>
</dbReference>
<dbReference type="GO" id="GO:0039576">
    <property type="term" value="P:symbiont-mediated suppression of host JAK-STAT cascade via inhibition of JAK1 activity"/>
    <property type="evidence" value="ECO:0007669"/>
    <property type="project" value="UniProtKB-KW"/>
</dbReference>
<dbReference type="GO" id="GO:0039502">
    <property type="term" value="P:symbiont-mediated suppression of host type I interferon-mediated signaling pathway"/>
    <property type="evidence" value="ECO:0007669"/>
    <property type="project" value="UniProtKB-KW"/>
</dbReference>
<dbReference type="Gene3D" id="3.40.1310.20">
    <property type="match status" value="1"/>
</dbReference>
<dbReference type="Gene3D" id="1.10.287.110">
    <property type="entry name" value="DnaJ domain"/>
    <property type="match status" value="1"/>
</dbReference>
<dbReference type="Gene3D" id="1.20.1050.70">
    <property type="entry name" value="Large T antigen, SV40, domain 3"/>
    <property type="match status" value="1"/>
</dbReference>
<dbReference type="Gene3D" id="3.40.50.300">
    <property type="entry name" value="P-loop containing nucleotide triphosphate hydrolases"/>
    <property type="match status" value="1"/>
</dbReference>
<dbReference type="Gene3D" id="1.10.10.510">
    <property type="entry name" value="Zinc finger, large T-antigen D1 domain"/>
    <property type="match status" value="1"/>
</dbReference>
<dbReference type="InterPro" id="IPR001623">
    <property type="entry name" value="DnaJ_domain"/>
</dbReference>
<dbReference type="InterPro" id="IPR014015">
    <property type="entry name" value="Helicase_SF3_DNA-vir"/>
</dbReference>
<dbReference type="InterPro" id="IPR036869">
    <property type="entry name" value="J_dom_sf"/>
</dbReference>
<dbReference type="InterPro" id="IPR010932">
    <property type="entry name" value="Lg_T_Ag_Polyomavir_C"/>
</dbReference>
<dbReference type="InterPro" id="IPR027417">
    <property type="entry name" value="P-loop_NTPase"/>
</dbReference>
<dbReference type="InterPro" id="IPR003133">
    <property type="entry name" value="T_Ag_DNA-bd"/>
</dbReference>
<dbReference type="InterPro" id="IPR017910">
    <property type="entry name" value="Znf_lg_T-Ag_D1-typ"/>
</dbReference>
<dbReference type="InterPro" id="IPR037102">
    <property type="entry name" value="Znf_lg_T-Ag_D1_dom_sf"/>
</dbReference>
<dbReference type="Pfam" id="PF06431">
    <property type="entry name" value="Polyoma_lg_T_C"/>
    <property type="match status" value="1"/>
</dbReference>
<dbReference type="Pfam" id="PF02217">
    <property type="entry name" value="T_Ag_DNA_bind"/>
    <property type="match status" value="1"/>
</dbReference>
<dbReference type="SMART" id="SM00271">
    <property type="entry name" value="DnaJ"/>
    <property type="match status" value="1"/>
</dbReference>
<dbReference type="SUPFAM" id="SSF46565">
    <property type="entry name" value="Chaperone J-domain"/>
    <property type="match status" value="1"/>
</dbReference>
<dbReference type="SUPFAM" id="SSF55464">
    <property type="entry name" value="Origin of replication-binding domain, RBD-like"/>
    <property type="match status" value="1"/>
</dbReference>
<dbReference type="SUPFAM" id="SSF52540">
    <property type="entry name" value="P-loop containing nucleoside triphosphate hydrolases"/>
    <property type="match status" value="1"/>
</dbReference>
<dbReference type="PROSITE" id="PS51206">
    <property type="entry name" value="SF3_HELICASE_1"/>
    <property type="match status" value="1"/>
</dbReference>
<dbReference type="PROSITE" id="PS51287">
    <property type="entry name" value="T_AG_OBD"/>
    <property type="match status" value="1"/>
</dbReference>
<dbReference type="PROSITE" id="PS51341">
    <property type="entry name" value="ZF_LTAG_D1"/>
    <property type="match status" value="1"/>
</dbReference>
<organismHost>
    <name type="scientific">Mus musculus</name>
    <name type="common">Mouse</name>
    <dbReference type="NCBI Taxonomy" id="10090"/>
</organismHost>
<organism>
    <name type="scientific">Murine polyomavirus (strain A2)</name>
    <name type="common">MPyV</name>
    <dbReference type="NCBI Taxonomy" id="10636"/>
    <lineage>
        <taxon>Viruses</taxon>
        <taxon>Monodnaviria</taxon>
        <taxon>Shotokuvirae</taxon>
        <taxon>Cossaviricota</taxon>
        <taxon>Papovaviricetes</taxon>
        <taxon>Sepolyvirales</taxon>
        <taxon>Polyomaviridae</taxon>
        <taxon>Alphapolyomavirus</taxon>
        <taxon>Mus musculus polyomavirus 1</taxon>
    </lineage>
</organism>
<evidence type="ECO:0000250" key="1">
    <source>
        <dbReference type="UniProtKB" id="P03070"/>
    </source>
</evidence>
<evidence type="ECO:0000255" key="2">
    <source>
        <dbReference type="PROSITE-ProRule" id="PRU00551"/>
    </source>
</evidence>
<evidence type="ECO:0000255" key="3">
    <source>
        <dbReference type="PROSITE-ProRule" id="PRU00620"/>
    </source>
</evidence>
<evidence type="ECO:0000255" key="4">
    <source>
        <dbReference type="PROSITE-ProRule" id="PRU00671"/>
    </source>
</evidence>
<evidence type="ECO:0000256" key="5">
    <source>
        <dbReference type="SAM" id="MobiDB-lite"/>
    </source>
</evidence>
<evidence type="ECO:0000305" key="6"/>
<protein>
    <recommendedName>
        <fullName>Large T antigen</fullName>
        <shortName>LT</shortName>
        <shortName>LT-AG</shortName>
        <ecNumber evidence="1">5.6.2.4</ecNumber>
    </recommendedName>
    <alternativeName>
        <fullName evidence="6">DNA 3'-5' helicase large T antigen</fullName>
    </alternativeName>
</protein>
<name>LT_POVMA</name>
<keyword id="KW-0007">Acetylation</keyword>
<keyword id="KW-0025">Alternative splicing</keyword>
<keyword id="KW-0067">ATP-binding</keyword>
<keyword id="KW-0235">DNA replication</keyword>
<keyword id="KW-0238">DNA-binding</keyword>
<keyword id="KW-0244">Early protein</keyword>
<keyword id="KW-1078">G1/S host cell cycle checkpoint dysregulation by virus</keyword>
<keyword id="KW-0347">Helicase</keyword>
<keyword id="KW-1048">Host nucleus</keyword>
<keyword id="KW-0945">Host-virus interaction</keyword>
<keyword id="KW-0378">Hydrolase</keyword>
<keyword id="KW-1090">Inhibition of host innate immune response by virus</keyword>
<keyword id="KW-1114">Inhibition of host interferon signaling pathway by virus</keyword>
<keyword id="KW-1096">Inhibition of host JAK1 by virus</keyword>
<keyword id="KW-0922">Interferon antiviral system evasion</keyword>
<keyword id="KW-0413">Isomerase</keyword>
<keyword id="KW-0460">Magnesium</keyword>
<keyword id="KW-0479">Metal-binding</keyword>
<keyword id="KW-1121">Modulation of host cell cycle by virus</keyword>
<keyword id="KW-0547">Nucleotide-binding</keyword>
<keyword id="KW-0553">Oncogene</keyword>
<keyword id="KW-0597">Phosphoprotein</keyword>
<keyword id="KW-1185">Reference proteome</keyword>
<keyword id="KW-0899">Viral immunoevasion</keyword>
<keyword id="KW-0862">Zinc</keyword>
<keyword id="KW-0863">Zinc-finger</keyword>
<reference key="1">
    <citation type="journal article" date="1980" name="Nature">
        <title>Coding potential and regulatory signals of the polyoma virus genome.</title>
        <authorList>
            <person name="Soeda E."/>
            <person name="Arrand J.R."/>
            <person name="Smolar N."/>
            <person name="Walsh J.E."/>
            <person name="Griffin B.E."/>
        </authorList>
    </citation>
    <scope>NUCLEOTIDE SEQUENCE [GENOMIC DNA]</scope>
</reference>
<proteinExistence type="inferred from homology"/>
<sequence>MDRVLSRADKERLLELLKLPRQLWGDFGRMQQAYKQQSLLLHPDKGGSHALMQELNSLWGTFKTEVYNLRMNLGGTGFQGSPPRTAERGTEESGHSPLHDDYWSFSYGSKYFTREWNDFFRKWDPSYQSPPKTAESSEQPDLFCYEEPLLSPNPSSPTDTPAHTAGRRRNPCVAEPDDSISPDPPRTPVSRKRPRPAGATGGGGGGVHANGGSVFGHPTGGTSTPAHPPPYHSQGGSESMGGSDSSGFAEGSFRSDPRCESENESYSQSCSQSSFNATPPKKAREDPAPSDFPSSLTGYLSHAIYSNKTFPAFLVYSTKEKCKQLYDTIGKFRPEFKCLVHYEEGGMLFFLTMTKHRVSAVKNYCSKLCRSFLMCKAVTKPMECYQVVTAAPFQLITENKPGLHQFEFTDEPEEQKAVDWIMVADFALENNLDDPLLIMGYYLDFAKEVPSCIKCSKEETRLQIHWKNHRKHAENADLFLNCKAQKTICQQAAASLASRRLKLVECTRSQLLKERLQQSLLRLKELGSSDALLYLAGVAWYQCLLEDFPQTLFKMLKLLTENVPKRRNILFRGPVNSGKTGLAAALISLLGGKSLNINCPADKLAFELGVAQDQFVVCFEDVKGQIALNKQLQPGMGVANLDNLRTTWNGSVKVNLEKKHSNKRSQLFPPCVCTMNEYLLPQTVWARFHMVLDFTCKPHLAQSLEKCEFLQRERIIQSGDTLALLLIWNFTSDVFDPDIQGLVKEVRDQFASECSYSLFCDILCNVQEGDDPLKDICDIAEYTVY</sequence>
<comment type="function">
    <text evidence="1">Isoform large T antigen is a key early protein essential for both driving viral replication and inducing cellular transformation. Plays a role in viral genome replication by driving entry of quiescent cells into the cell cycle and by autoregulating the synthesis of viral early mRNA. Displays highly oncogenic activities by corrupting the host cellular checkpoint mechanisms that guard cell division and the transcription, replication, and repair of DNA. Participates in the modulation of cellular gene expression preceeding viral DNA replication. This step involves binding to host key cell cycle regulators retinoblastoma protein RB1/pRb and TP53. Induces the disassembly of host E2F1 transcription factors from RB1, thus promoting transcriptional activation of E2F1-regulated S-phase genes. Inhibits host TP53 binding to DNA, abrogating the ability of TP53 to stimulate gene expression. Plays the role of a TFIID-associated factor (TAF) in transcription initiation for all three RNA polymerases, by stabilizing the TBP-TFIIA complex on promoters. Initiates viral DNA replication and unwinding via interactions with the viral origin of replication. Binds two adjacent sites in the SV40 origin. The replication fork movement is facilitated by Large T antigen helicase activity. Has processive 3'-5' DNA helicase activity which requires a short 3' single-stranded region and ATP. Activates the transcription of viral late mRNA, through host TBP and TFIIA stabilization. Interferes with histone deacetylation mediated by HDAC1, leading to activation of transcription.</text>
</comment>
<comment type="catalytic activity">
    <reaction evidence="1">
        <text>Couples ATP hydrolysis with the unwinding of duplex DNA by translocating in the 3'-5' direction.</text>
        <dbReference type="EC" id="5.6.2.4"/>
    </reaction>
</comment>
<comment type="catalytic activity">
    <reaction evidence="1">
        <text>ATP + H2O = ADP + phosphate + H(+)</text>
        <dbReference type="Rhea" id="RHEA:13065"/>
        <dbReference type="ChEBI" id="CHEBI:15377"/>
        <dbReference type="ChEBI" id="CHEBI:15378"/>
        <dbReference type="ChEBI" id="CHEBI:30616"/>
        <dbReference type="ChEBI" id="CHEBI:43474"/>
        <dbReference type="ChEBI" id="CHEBI:456216"/>
        <dbReference type="EC" id="5.6.2.4"/>
    </reaction>
</comment>
<comment type="cofactor">
    <cofactor evidence="1">
        <name>Mg(2+)</name>
        <dbReference type="ChEBI" id="CHEBI:18420"/>
    </cofactor>
    <text evidence="1">DNA helicase activity requires Mg(2+).</text>
</comment>
<comment type="subunit">
    <text evidence="1">Forms homohexamers in the presence of ATP. Interacts with host HDAC1. Interacts (via LXCXE domain) with host RB1; the interaction induces the aberrant dissociation of RB1-E2F1 complex thereby disrupting RB1's activity. Interacts (via LXCXE domain) with host pRB-related proteins RBL1 and RBL2. Interacts (via C-terminus) with host TOP1 and POLA1 allowing DNA replication. Interacts with host preinitiation complex components TBP, TFIIA and TFIID to regulate transcription initiation.</text>
</comment>
<comment type="subcellular location">
    <subcellularLocation>
        <location evidence="1">Host nucleus</location>
    </subcellularLocation>
</comment>
<comment type="alternative products">
    <event type="alternative splicing"/>
    <isoform>
        <id>P03073-1</id>
        <name>Large T antigen</name>
        <sequence type="displayed"/>
    </isoform>
    <isoform>
        <id>P03077-1</id>
        <name>Middle T antigen</name>
        <sequence type="external"/>
    </isoform>
    <isoform>
        <id>P68835-1</id>
        <name>Small t antigen</name>
        <sequence type="external"/>
    </isoform>
</comment>
<comment type="domain">
    <text evidence="1">The J domain is essential for multiple viral activities, including virion assembly, viral DNA replication, transformation and transcriptional activation.</text>
</comment>
<comment type="domain">
    <text evidence="1">The LXCXE motif specifically binds to host pRB, RBL1, and RBL2.</text>
</comment>
<comment type="domain">
    <text evidence="1">The zinc finger region contributes to protein-protein interactions essential for the assembly of stable T-antigen hexamers at the origin of replication. The hexamers are required for subsequent alterations in the structure of origin DNA.</text>
</comment>
<comment type="domain">
    <text evidence="1">The ATP binding/ATPase domain is required for proper hexamer assembly and helicase activity.</text>
</comment>
<comment type="PTM">
    <text evidence="1">Phosphorylated on both serine and threonine residues. Small t antigen inhibits the dephosphorylation by the AC form of PP2A.</text>
</comment>
<comment type="PTM">
    <text evidence="1">O-Glycosylated near the C-terminal region.</text>
</comment>
<comment type="PTM">
    <text evidence="1">Acetylated by CBP in a TP53-dependent manner.</text>
</comment>